<sequence>MKRFVRTVLGDIDPKDLGICDCHDHLIKNWGPEAKEHPDFVMLSNEAAIKECLEFVHHGGRSIVTMDPPNVGRDVKRMVAIAEQLKGKLNIIMATGFHKAAFYDKGSSWLAQVPVNEIVPMLVAEIEEGMDLYNYSGPVVKRGKAKAGIIKAGTGYAAIDRLELKALEAVAITSITTGAPVLVHTQLGTMAYEAAQHLIDFGVNPRKIQLSHLNKNPDEYYYAKIIRELGVTLCFDGPDRVKYYPDCLLAKHIKYLVDLGFVKHITLALDAGRVLYQKHYGLEKGKECFGFAYLFERFIPLLKEVGVSDAAINTILVENLAEILAFDAPRQFNPKAVHPRVLALKKQLKIE</sequence>
<feature type="chain" id="PRO_0000205368" description="Uncharacterized protein MPN_497">
    <location>
        <begin position="1"/>
        <end position="351"/>
    </location>
</feature>
<feature type="binding site" evidence="1">
    <location>
        <position position="23"/>
    </location>
    <ligand>
        <name>Zn(2+)</name>
        <dbReference type="ChEBI" id="CHEBI:29105"/>
        <label>1</label>
    </ligand>
</feature>
<feature type="binding site" evidence="1">
    <location>
        <position position="25"/>
    </location>
    <ligand>
        <name>Zn(2+)</name>
        <dbReference type="ChEBI" id="CHEBI:29105"/>
        <label>1</label>
    </ligand>
</feature>
<feature type="binding site" description="via carbamate group" evidence="1">
    <location>
        <position position="151"/>
    </location>
    <ligand>
        <name>Zn(2+)</name>
        <dbReference type="ChEBI" id="CHEBI:29105"/>
        <label>1</label>
    </ligand>
</feature>
<feature type="binding site" description="via carbamate group" evidence="1">
    <location>
        <position position="151"/>
    </location>
    <ligand>
        <name>Zn(2+)</name>
        <dbReference type="ChEBI" id="CHEBI:29105"/>
        <label>2</label>
    </ligand>
</feature>
<feature type="binding site" evidence="1">
    <location>
        <position position="184"/>
    </location>
    <ligand>
        <name>Zn(2+)</name>
        <dbReference type="ChEBI" id="CHEBI:29105"/>
        <label>2</label>
    </ligand>
</feature>
<feature type="binding site" evidence="1">
    <location>
        <position position="212"/>
    </location>
    <ligand>
        <name>Zn(2+)</name>
        <dbReference type="ChEBI" id="CHEBI:29105"/>
        <label>2</label>
    </ligand>
</feature>
<feature type="binding site" evidence="1">
    <location>
        <position position="270"/>
    </location>
    <ligand>
        <name>Zn(2+)</name>
        <dbReference type="ChEBI" id="CHEBI:29105"/>
        <label>1</label>
    </ligand>
</feature>
<feature type="modified residue" description="N6-carboxylysine" evidence="1">
    <location>
        <position position="151"/>
    </location>
</feature>
<proteinExistence type="inferred from homology"/>
<accession>P75290</accession>
<protein>
    <recommendedName>
        <fullName>Uncharacterized protein MPN_497</fullName>
    </recommendedName>
</protein>
<organism>
    <name type="scientific">Mycoplasma pneumoniae (strain ATCC 29342 / M129 / Subtype 1)</name>
    <name type="common">Mycoplasmoides pneumoniae</name>
    <dbReference type="NCBI Taxonomy" id="272634"/>
    <lineage>
        <taxon>Bacteria</taxon>
        <taxon>Bacillati</taxon>
        <taxon>Mycoplasmatota</taxon>
        <taxon>Mycoplasmoidales</taxon>
        <taxon>Mycoplasmoidaceae</taxon>
        <taxon>Mycoplasmoides</taxon>
    </lineage>
</organism>
<dbReference type="EMBL" id="U00089">
    <property type="protein sequence ID" value="AAB95994.1"/>
    <property type="status" value="ALT_SEQ"/>
    <property type="molecule type" value="Genomic_DNA"/>
</dbReference>
<dbReference type="PIR" id="S73672">
    <property type="entry name" value="S73672"/>
</dbReference>
<dbReference type="RefSeq" id="NP_110185.1">
    <property type="nucleotide sequence ID" value="NC_000912.1"/>
</dbReference>
<dbReference type="SMR" id="P75290"/>
<dbReference type="IntAct" id="P75290">
    <property type="interactions" value="3"/>
</dbReference>
<dbReference type="STRING" id="272634.MPN_497"/>
<dbReference type="EnsemblBacteria" id="AAB95994">
    <property type="protein sequence ID" value="AAB95994"/>
    <property type="gene ID" value="MPN_497"/>
</dbReference>
<dbReference type="KEGG" id="mpn:MPN_497"/>
<dbReference type="PATRIC" id="fig|272634.6.peg.539"/>
<dbReference type="HOGENOM" id="CLU_1804069_0_0_14"/>
<dbReference type="OrthoDB" id="105927at2"/>
<dbReference type="Proteomes" id="UP000000808">
    <property type="component" value="Chromosome"/>
</dbReference>
<dbReference type="GO" id="GO:0016787">
    <property type="term" value="F:hydrolase activity"/>
    <property type="evidence" value="ECO:0007669"/>
    <property type="project" value="UniProtKB-KW"/>
</dbReference>
<dbReference type="GO" id="GO:0008270">
    <property type="term" value="F:zinc ion binding"/>
    <property type="evidence" value="ECO:0007669"/>
    <property type="project" value="InterPro"/>
</dbReference>
<dbReference type="GO" id="GO:0009056">
    <property type="term" value="P:catabolic process"/>
    <property type="evidence" value="ECO:0007669"/>
    <property type="project" value="InterPro"/>
</dbReference>
<dbReference type="Gene3D" id="3.20.20.140">
    <property type="entry name" value="Metal-dependent hydrolases"/>
    <property type="match status" value="1"/>
</dbReference>
<dbReference type="InterPro" id="IPR032466">
    <property type="entry name" value="Metal_Hydrolase"/>
</dbReference>
<dbReference type="InterPro" id="IPR001559">
    <property type="entry name" value="Phosphotriesterase"/>
</dbReference>
<dbReference type="PANTHER" id="PTHR10819">
    <property type="entry name" value="PHOSPHOTRIESTERASE-RELATED"/>
    <property type="match status" value="1"/>
</dbReference>
<dbReference type="PANTHER" id="PTHR10819:SF3">
    <property type="entry name" value="PHOSPHOTRIESTERASE-RELATED PROTEIN"/>
    <property type="match status" value="1"/>
</dbReference>
<dbReference type="Pfam" id="PF02126">
    <property type="entry name" value="PTE"/>
    <property type="match status" value="1"/>
</dbReference>
<dbReference type="PIRSF" id="PIRSF016839">
    <property type="entry name" value="PhP"/>
    <property type="match status" value="1"/>
</dbReference>
<dbReference type="SUPFAM" id="SSF51556">
    <property type="entry name" value="Metallo-dependent hydrolases"/>
    <property type="match status" value="1"/>
</dbReference>
<dbReference type="PROSITE" id="PS51347">
    <property type="entry name" value="PHOSPHOTRIESTERASE_2"/>
    <property type="match status" value="1"/>
</dbReference>
<evidence type="ECO:0000255" key="1">
    <source>
        <dbReference type="PROSITE-ProRule" id="PRU00679"/>
    </source>
</evidence>
<evidence type="ECO:0000305" key="2"/>
<name>Y497_MYCPN</name>
<gene>
    <name type="ordered locus">MPN_497</name>
    <name type="ORF">MP346</name>
    <name type="ORF">P02_orf143</name>
</gene>
<reference key="1">
    <citation type="journal article" date="1996" name="Nucleic Acids Res.">
        <title>Complete sequence analysis of the genome of the bacterium Mycoplasma pneumoniae.</title>
        <authorList>
            <person name="Himmelreich R."/>
            <person name="Hilbert H."/>
            <person name="Plagens H."/>
            <person name="Pirkl E."/>
            <person name="Li B.-C."/>
            <person name="Herrmann R."/>
        </authorList>
    </citation>
    <scope>NUCLEOTIDE SEQUENCE [LARGE SCALE GENOMIC DNA]</scope>
    <source>
        <strain>ATCC 29342 / M129 / Subtype 1</strain>
    </source>
</reference>
<keyword id="KW-0378">Hydrolase</keyword>
<keyword id="KW-0479">Metal-binding</keyword>
<keyword id="KW-1185">Reference proteome</keyword>
<keyword id="KW-0862">Zinc</keyword>
<comment type="cofactor">
    <cofactor evidence="1">
        <name>Zn(2+)</name>
        <dbReference type="ChEBI" id="CHEBI:29105"/>
    </cofactor>
    <text evidence="1">Binds 2 Zn(2+) ions per subunit.</text>
</comment>
<comment type="similarity">
    <text evidence="1">Belongs to the metallo-dependent hydrolases superfamily. Phosphotriesterase family.</text>
</comment>
<comment type="sequence caution" evidence="2">
    <conflict type="erroneous initiation">
        <sequence resource="EMBL-CDS" id="AAB95994"/>
    </conflict>
    <text>Truncated N-terminus.</text>
</comment>
<comment type="sequence caution" evidence="2">
    <conflict type="erroneous termination">
        <sequence resource="EMBL-CDS" id="AAB95994"/>
    </conflict>
    <text>Truncated C-terminus.</text>
</comment>
<comment type="sequence caution" evidence="2">
    <conflict type="frameshift">
        <sequence resource="EMBL-CDS" id="AAB95994"/>
    </conflict>
</comment>